<dbReference type="PIR" id="S21748">
    <property type="entry name" value="S21748"/>
</dbReference>
<dbReference type="SMR" id="P26913"/>
<dbReference type="STRING" id="4565.P26913"/>
<dbReference type="PaxDb" id="4565-Traes_4DS_897D0A9DB.1"/>
<dbReference type="eggNOG" id="ENOG502S4CI">
    <property type="taxonomic scope" value="Eukaryota"/>
</dbReference>
<dbReference type="Proteomes" id="UP000019116">
    <property type="component" value="Unplaced"/>
</dbReference>
<dbReference type="GO" id="GO:0008289">
    <property type="term" value="F:lipid binding"/>
    <property type="evidence" value="ECO:0007669"/>
    <property type="project" value="UniProtKB-KW"/>
</dbReference>
<dbReference type="GO" id="GO:0006869">
    <property type="term" value="P:lipid transport"/>
    <property type="evidence" value="ECO:0007669"/>
    <property type="project" value="InterPro"/>
</dbReference>
<dbReference type="Gene3D" id="1.10.110.10">
    <property type="entry name" value="Plant lipid-transfer and hydrophobic proteins"/>
    <property type="match status" value="1"/>
</dbReference>
<dbReference type="InterPro" id="IPR036312">
    <property type="entry name" value="Bifun_inhib/LTP/seed_sf"/>
</dbReference>
<dbReference type="InterPro" id="IPR016140">
    <property type="entry name" value="Bifunc_inhib/LTP/seed_store"/>
</dbReference>
<dbReference type="InterPro" id="IPR000528">
    <property type="entry name" value="Plant_nsLTP"/>
</dbReference>
<dbReference type="Pfam" id="PF00234">
    <property type="entry name" value="Tryp_alpha_amyl"/>
    <property type="match status" value="1"/>
</dbReference>
<dbReference type="PRINTS" id="PR00382">
    <property type="entry name" value="LIPIDTRNSFER"/>
</dbReference>
<dbReference type="SUPFAM" id="SSF47699">
    <property type="entry name" value="Bifunctional inhibitor/lipid-transfer protein/seed storage 2S albumin"/>
    <property type="match status" value="1"/>
</dbReference>
<keyword id="KW-0903">Direct protein sequencing</keyword>
<keyword id="KW-0446">Lipid-binding</keyword>
<keyword id="KW-0597">Phosphoprotein</keyword>
<keyword id="KW-1185">Reference proteome</keyword>
<keyword id="KW-0813">Transport</keyword>
<comment type="function">
    <text>Plant non-specific lipid-transfer proteins transfer phospholipids as well as galactolipids across membranes. May play a role in wax or cutin deposition in the cell walls of expanding epidermal cells and certain secretory tissues.</text>
</comment>
<comment type="PTM">
    <text>Phosphorylated by Ca(2+)-dependent protein kinase.</text>
</comment>
<comment type="similarity">
    <text evidence="1">Belongs to the plant LTP family.</text>
</comment>
<proteinExistence type="evidence at protein level"/>
<feature type="chain" id="PRO_0000153888" description="Probable non-specific lipid-transfer protein">
    <location>
        <begin position="1"/>
        <end position="40" status="greater than"/>
    </location>
</feature>
<feature type="unsure residue">
    <location>
        <position position="22"/>
    </location>
</feature>
<feature type="unsure residue">
    <location>
        <position position="40"/>
    </location>
</feature>
<feature type="non-terminal residue">
    <location>
        <position position="40"/>
    </location>
</feature>
<reference key="1">
    <citation type="journal article" date="1992" name="Biochim. Biophys. Acta">
        <title>Purification and characterization of wheat and pine small basic protein substrates for plant calcium-dependent protein kinase.</title>
        <authorList>
            <person name="Polya G.M."/>
            <person name="Chandra S."/>
            <person name="Chung R."/>
            <person name="Neumann G.M."/>
            <person name="Hoej P.B."/>
        </authorList>
    </citation>
    <scope>PROTEIN SEQUENCE</scope>
    <source>
        <tissue>Seed</tissue>
    </source>
</reference>
<organism>
    <name type="scientific">Triticum aestivum</name>
    <name type="common">Wheat</name>
    <dbReference type="NCBI Taxonomy" id="4565"/>
    <lineage>
        <taxon>Eukaryota</taxon>
        <taxon>Viridiplantae</taxon>
        <taxon>Streptophyta</taxon>
        <taxon>Embryophyta</taxon>
        <taxon>Tracheophyta</taxon>
        <taxon>Spermatophyta</taxon>
        <taxon>Magnoliopsida</taxon>
        <taxon>Liliopsida</taxon>
        <taxon>Poales</taxon>
        <taxon>Poaceae</taxon>
        <taxon>BOP clade</taxon>
        <taxon>Pooideae</taxon>
        <taxon>Triticodae</taxon>
        <taxon>Triticeae</taxon>
        <taxon>Triticinae</taxon>
        <taxon>Triticum</taxon>
    </lineage>
</organism>
<evidence type="ECO:0000305" key="1"/>
<protein>
    <recommendedName>
        <fullName>Probable non-specific lipid-transfer protein</fullName>
        <shortName>Basic protein</shortName>
        <shortName>LTP</shortName>
    </recommendedName>
    <alternativeName>
        <fullName>WBP</fullName>
    </alternativeName>
</protein>
<name>NLTPB_WHEAT</name>
<sequence length="40" mass="3831">AVANCGQVVSYLAPCISYAMGRVSAPGGGCCSGVRGLNAA</sequence>
<accession>P26913</accession>